<proteinExistence type="evidence at protein level"/>
<feature type="signal peptide" evidence="1">
    <location>
        <begin position="1"/>
        <end position="21"/>
    </location>
</feature>
<feature type="chain" id="PRO_5014588544" description="Serine protease inhibitor 2" evidence="1">
    <location>
        <begin position="22"/>
        <end position="409"/>
    </location>
</feature>
<feature type="short sequence motif" description="Hinge region; required for binding to peptidase" evidence="8">
    <location>
        <begin position="356"/>
        <end position="360"/>
    </location>
</feature>
<feature type="site" description="Reactive bond" evidence="14">
    <location>
        <begin position="371"/>
        <end position="372"/>
    </location>
</feature>
<feature type="glycosylation site" description="N-linked (GlcNAc...) asparagine" evidence="2">
    <location>
        <position position="294"/>
    </location>
</feature>
<feature type="glycosylation site" description="N-linked (GlcNAc...) asparagine" evidence="2">
    <location>
        <position position="324"/>
    </location>
</feature>
<feature type="mutagenesis site" description="6.7-fold reduction in CLIPB9 inhibition without affecting the interaction with CLIPB9; when associated with C-359." evidence="8">
    <original>K</original>
    <variation>C</variation>
    <location>
        <position position="198"/>
    </location>
</feature>
<feature type="mutagenesis site" description="3-fold increase in peptidase CLIPB9 inhibition. Does not affect interaction with CLIPB9." evidence="8">
    <original>S</original>
    <variation>E</variation>
    <location>
        <position position="358"/>
    </location>
</feature>
<feature type="mutagenesis site" description="Inhibits interaction with CLIPB9 but does not inhibit CLIPB9 peptidase activity. Cleavage of SRNP2 by CLIPB9 is not affected." evidence="8">
    <original>S</original>
    <variation>W</variation>
    <location>
        <position position="358"/>
    </location>
</feature>
<feature type="mutagenesis site" description="6.7-fold reduction in CLIPB9 inhibition without affecting the interaction with CLIPB9; when associated with C-198." evidence="8">
    <original>E</original>
    <variation>C</variation>
    <location>
        <position position="359"/>
    </location>
</feature>
<feature type="sequence conflict" description="In Ref. 1; ABJ52801." evidence="13" ref="1">
    <original>NFV</original>
    <variation>SFL</variation>
    <location>
        <begin position="5"/>
        <end position="7"/>
    </location>
</feature>
<feature type="helix" evidence="23">
    <location>
        <begin position="36"/>
        <end position="47"/>
    </location>
</feature>
<feature type="strand" evidence="23">
    <location>
        <begin position="53"/>
        <end position="55"/>
    </location>
</feature>
<feature type="helix" evidence="23">
    <location>
        <begin position="57"/>
        <end position="70"/>
    </location>
</feature>
<feature type="helix" evidence="23">
    <location>
        <begin position="72"/>
        <end position="74"/>
    </location>
</feature>
<feature type="helix" evidence="23">
    <location>
        <begin position="81"/>
        <end position="85"/>
    </location>
</feature>
<feature type="helix" evidence="23">
    <location>
        <begin position="86"/>
        <end position="89"/>
    </location>
</feature>
<feature type="helix" evidence="23">
    <location>
        <begin position="95"/>
        <end position="110"/>
    </location>
</feature>
<feature type="strand" evidence="23">
    <location>
        <begin position="117"/>
        <end position="127"/>
    </location>
</feature>
<feature type="helix" evidence="23">
    <location>
        <begin position="134"/>
        <end position="144"/>
    </location>
</feature>
<feature type="strand" evidence="23">
    <location>
        <begin position="146"/>
        <end position="151"/>
    </location>
</feature>
<feature type="helix" evidence="23">
    <location>
        <begin position="156"/>
        <end position="170"/>
    </location>
</feature>
<feature type="turn" evidence="23">
    <location>
        <begin position="171"/>
        <end position="173"/>
    </location>
</feature>
<feature type="helix" evidence="23">
    <location>
        <begin position="181"/>
        <end position="184"/>
    </location>
</feature>
<feature type="strand" evidence="23">
    <location>
        <begin position="188"/>
        <end position="203"/>
    </location>
</feature>
<feature type="strand" evidence="23">
    <location>
        <begin position="212"/>
        <end position="215"/>
    </location>
</feature>
<feature type="strand" evidence="23">
    <location>
        <begin position="218"/>
        <end position="221"/>
    </location>
</feature>
<feature type="strand" evidence="23">
    <location>
        <begin position="223"/>
        <end position="239"/>
    </location>
</feature>
<feature type="turn" evidence="23">
    <location>
        <begin position="240"/>
        <end position="243"/>
    </location>
</feature>
<feature type="strand" evidence="23">
    <location>
        <begin position="244"/>
        <end position="251"/>
    </location>
</feature>
<feature type="strand" evidence="23">
    <location>
        <begin position="254"/>
        <end position="263"/>
    </location>
</feature>
<feature type="helix" evidence="23">
    <location>
        <begin position="269"/>
        <end position="275"/>
    </location>
</feature>
<feature type="helix" evidence="23">
    <location>
        <begin position="278"/>
        <end position="286"/>
    </location>
</feature>
<feature type="strand" evidence="23">
    <location>
        <begin position="289"/>
        <end position="298"/>
    </location>
</feature>
<feature type="strand" evidence="23">
    <location>
        <begin position="300"/>
        <end position="308"/>
    </location>
</feature>
<feature type="helix" evidence="23">
    <location>
        <begin position="309"/>
        <end position="314"/>
    </location>
</feature>
<feature type="helix" evidence="23">
    <location>
        <begin position="319"/>
        <end position="321"/>
    </location>
</feature>
<feature type="strand" evidence="24">
    <location>
        <begin position="322"/>
        <end position="324"/>
    </location>
</feature>
<feature type="turn" evidence="23">
    <location>
        <begin position="328"/>
        <end position="330"/>
    </location>
</feature>
<feature type="strand" evidence="23">
    <location>
        <begin position="344"/>
        <end position="353"/>
    </location>
</feature>
<feature type="strand" evidence="23">
    <location>
        <begin position="355"/>
        <end position="359"/>
    </location>
</feature>
<feature type="strand" evidence="23">
    <location>
        <begin position="378"/>
        <end position="381"/>
    </location>
</feature>
<feature type="strand" evidence="23">
    <location>
        <begin position="386"/>
        <end position="392"/>
    </location>
</feature>
<feature type="turn" evidence="23">
    <location>
        <begin position="393"/>
        <end position="395"/>
    </location>
</feature>
<feature type="strand" evidence="23">
    <location>
        <begin position="398"/>
        <end position="406"/>
    </location>
</feature>
<reference evidence="15" key="1">
    <citation type="journal article" date="2009" name="Gene">
        <title>The serpin gene family in Anopheles gambiae.</title>
        <authorList>
            <person name="Suwanchaichinda C."/>
            <person name="Kanost M.R."/>
        </authorList>
    </citation>
    <scope>NUCLEOTIDE SEQUENCE [MRNA]</scope>
    <scope>DEVELOPMENTAL STAGE</scope>
</reference>
<reference evidence="17" key="2">
    <citation type="journal article" date="2002" name="Science">
        <title>The genome sequence of the malaria mosquito Anopheles gambiae.</title>
        <authorList>
            <person name="Holt R.A."/>
            <person name="Subramanian G.M."/>
            <person name="Halpern A."/>
            <person name="Sutton G.G."/>
            <person name="Charlab R."/>
            <person name="Nusskern D.R."/>
            <person name="Wincker P."/>
            <person name="Clark A.G."/>
            <person name="Ribeiro J.M.C."/>
            <person name="Wides R."/>
            <person name="Salzberg S.L."/>
            <person name="Loftus B.J."/>
            <person name="Yandell M.D."/>
            <person name="Majoros W.H."/>
            <person name="Rusch D.B."/>
            <person name="Lai Z."/>
            <person name="Kraft C.L."/>
            <person name="Abril J.F."/>
            <person name="Anthouard V."/>
            <person name="Arensburger P."/>
            <person name="Atkinson P.W."/>
            <person name="Baden H."/>
            <person name="de Berardinis V."/>
            <person name="Baldwin D."/>
            <person name="Benes V."/>
            <person name="Biedler J."/>
            <person name="Blass C."/>
            <person name="Bolanos R."/>
            <person name="Boscus D."/>
            <person name="Barnstead M."/>
            <person name="Cai S."/>
            <person name="Center A."/>
            <person name="Chaturverdi K."/>
            <person name="Christophides G.K."/>
            <person name="Chrystal M.A.M."/>
            <person name="Clamp M."/>
            <person name="Cravchik A."/>
            <person name="Curwen V."/>
            <person name="Dana A."/>
            <person name="Delcher A."/>
            <person name="Dew I."/>
            <person name="Evans C.A."/>
            <person name="Flanigan M."/>
            <person name="Grundschober-Freimoser A."/>
            <person name="Friedli L."/>
            <person name="Gu Z."/>
            <person name="Guan P."/>
            <person name="Guigo R."/>
            <person name="Hillenmeyer M.E."/>
            <person name="Hladun S.L."/>
            <person name="Hogan J.R."/>
            <person name="Hong Y.S."/>
            <person name="Hoover J."/>
            <person name="Jaillon O."/>
            <person name="Ke Z."/>
            <person name="Kodira C.D."/>
            <person name="Kokoza E."/>
            <person name="Koutsos A."/>
            <person name="Letunic I."/>
            <person name="Levitsky A.A."/>
            <person name="Liang Y."/>
            <person name="Lin J.-J."/>
            <person name="Lobo N.F."/>
            <person name="Lopez J.R."/>
            <person name="Malek J.A."/>
            <person name="McIntosh T.C."/>
            <person name="Meister S."/>
            <person name="Miller J.R."/>
            <person name="Mobarry C."/>
            <person name="Mongin E."/>
            <person name="Murphy S.D."/>
            <person name="O'Brochta D.A."/>
            <person name="Pfannkoch C."/>
            <person name="Qi R."/>
            <person name="Regier M.A."/>
            <person name="Remington K."/>
            <person name="Shao H."/>
            <person name="Sharakhova M.V."/>
            <person name="Sitter C.D."/>
            <person name="Shetty J."/>
            <person name="Smith T.J."/>
            <person name="Strong R."/>
            <person name="Sun J."/>
            <person name="Thomasova D."/>
            <person name="Ton L.Q."/>
            <person name="Topalis P."/>
            <person name="Tu Z.J."/>
            <person name="Unger M.F."/>
            <person name="Walenz B."/>
            <person name="Wang A.H."/>
            <person name="Wang J."/>
            <person name="Wang M."/>
            <person name="Wang X."/>
            <person name="Woodford K.J."/>
            <person name="Wortman J.R."/>
            <person name="Wu M."/>
            <person name="Yao A."/>
            <person name="Zdobnov E.M."/>
            <person name="Zhang H."/>
            <person name="Zhao Q."/>
            <person name="Zhao S."/>
            <person name="Zhu S.C."/>
            <person name="Zhimulev I."/>
            <person name="Coluzzi M."/>
            <person name="della Torre A."/>
            <person name="Roth C.W."/>
            <person name="Louis C."/>
            <person name="Kalush F."/>
            <person name="Mural R.J."/>
            <person name="Myers E.W."/>
            <person name="Adams M.D."/>
            <person name="Smith H.O."/>
            <person name="Broder S."/>
            <person name="Gardner M.J."/>
            <person name="Fraser C.M."/>
            <person name="Birney E."/>
            <person name="Bork P."/>
            <person name="Brey P.T."/>
            <person name="Venter J.C."/>
            <person name="Weissenbach J."/>
            <person name="Kafatos F.C."/>
            <person name="Collins F.H."/>
            <person name="Hoffman S.L."/>
        </authorList>
    </citation>
    <scope>NUCLEOTIDE SEQUENCE [LARGE SCALE GENOMIC DNA]</scope>
    <source>
        <strain evidence="17">PEST</strain>
    </source>
</reference>
<reference evidence="13" key="3">
    <citation type="journal article" date="2005" name="EMBO Rep.">
        <title>Anopheles gambiae SRPN2 facilitates midgut invasion by the malaria parasite Plasmodium berghei.</title>
        <authorList>
            <person name="Michel K."/>
            <person name="Budd A."/>
            <person name="Pinto S."/>
            <person name="Gibson T.J."/>
            <person name="Kafatos F.C."/>
        </authorList>
    </citation>
    <scope>FUNCTION</scope>
    <scope>SUBCELLULAR LOCATION</scope>
    <scope>DISRUPTION PHENOTYPE</scope>
</reference>
<reference evidence="13" key="4">
    <citation type="journal article" date="2011" name="Cell. Mol. Life Sci.">
        <title>Characterization of a regulatory unit that controls melanization and affects longevity of mosquitoes.</title>
        <authorList>
            <person name="An C."/>
            <person name="Budd A."/>
            <person name="Kanost M.R."/>
            <person name="Michel K."/>
        </authorList>
    </citation>
    <scope>FUNCTION</scope>
    <scope>INTERACTION WITH CLIPB9</scope>
    <scope>SUBCELLULAR LOCATION</scope>
    <scope>DISRUPTION PHENOTYPE</scope>
    <source>
        <strain evidence="6">G3</strain>
    </source>
</reference>
<reference key="5">
    <citation type="journal article" date="2020" name="Front. Cell. Infect. Microbiol.">
        <title>CLIPB10 is a Terminal Protease in the Regulatory Network That Controls Melanization in the African Malaria Mosquito Anopheles gambiae.</title>
        <authorList>
            <person name="Zhang X."/>
            <person name="Li M."/>
            <person name="El Moussawi L."/>
            <person name="Saab S."/>
            <person name="Zhang S."/>
            <person name="Osta M.A."/>
            <person name="Michel K."/>
        </authorList>
    </citation>
    <scope>FUNCTION</scope>
    <scope>INTERACTION WITH CLIPB10</scope>
    <scope>DISRUPTION PHENOTYPE</scope>
    <source>
        <strain evidence="10">G3</strain>
    </source>
</reference>
<reference key="6">
    <citation type="journal article" date="2020" name="PLoS Pathog.">
        <title>The CLIP-domain serine protease CLIPC9 regulates melanization downstream of SPCLIP1, CLIPA8, and CLIPA28 in the malaria vector Anopheles gambiae.</title>
        <authorList>
            <person name="Sousa G.L."/>
            <person name="Bishnoi R."/>
            <person name="Baxter R.H.G."/>
            <person name="Povelones M."/>
        </authorList>
    </citation>
    <scope>FUNCTION</scope>
    <scope>DISRUPTION PHENOTYPE</scope>
    <source>
        <strain evidence="9">G3</strain>
    </source>
</reference>
<reference key="7">
    <citation type="journal article" date="2023" name="J. Innate Immun.">
        <title>CLIPB4 Is a Central Node in the Protease Network that Regulates Humoral Immunity in Anopheles gambiae Mosquitoes.</title>
        <authorList>
            <person name="Zhang X."/>
            <person name="Zhang S."/>
            <person name="Kuang J."/>
            <person name="Sellens K.A."/>
            <person name="Morejon B."/>
            <person name="Saab S.A."/>
            <person name="Li M."/>
            <person name="Metto E.C."/>
            <person name="An C."/>
            <person name="Culbertson C.T."/>
            <person name="Osta M.A."/>
            <person name="Scoglio C."/>
            <person name="Michel K."/>
        </authorList>
    </citation>
    <scope>FUNCTION</scope>
    <scope>INTERACTION WITH CLIPB4</scope>
    <scope>DISRUPTION PHENOTYPE</scope>
</reference>
<reference evidence="18" key="8">
    <citation type="journal article" date="2011" name="Proteins">
        <title>Crystal structure of native Anopheles gambiae serpin-2, a negative regulator of melanization in mosquitoes.</title>
        <authorList>
            <person name="An C."/>
            <person name="Lovell S."/>
            <person name="Kanost M.R."/>
            <person name="Battaile K.P."/>
            <person name="Michel K."/>
        </authorList>
    </citation>
    <scope>X-RAY CRYSTALLOGRAPHY (1.75 ANGSTROMS) OF 22-409</scope>
</reference>
<reference evidence="19 20 21 22" key="9">
    <citation type="journal article" date="2015" name="J. Biol. Chem.">
        <title>Structural and inhibitory effects of hinge loop mutagenesis in serpin-2 from the malaria vector Anopheles gambiae.</title>
        <authorList>
            <person name="Zhang X."/>
            <person name="Meekins D.A."/>
            <person name="An C."/>
            <person name="Zolkiewski M."/>
            <person name="Battaile K.P."/>
            <person name="Kanost M.R."/>
            <person name="Lovell S."/>
            <person name="Michel K."/>
        </authorList>
    </citation>
    <scope>X-RAY CRYSTALLOGRAPHY (1.90 ANGSTROMS) OF 22-409 OF MUTANTS CYS-198; GLU-368; TRP-358 AND CYS-359</scope>
    <scope>FUNCTION</scope>
    <scope>INTERACTION WITH CLIPB9</scope>
    <scope>PROTEOLYTIC CLEAVAGE</scope>
    <scope>MUTAGENESIS OF LYS-198; SER-358 AND GLU-359</scope>
</reference>
<keyword id="KW-0002">3D-structure</keyword>
<keyword id="KW-0325">Glycoprotein</keyword>
<keyword id="KW-0391">Immunity</keyword>
<keyword id="KW-0399">Innate immunity</keyword>
<keyword id="KW-0646">Protease inhibitor</keyword>
<keyword id="KW-1185">Reference proteome</keyword>
<keyword id="KW-0964">Secreted</keyword>
<keyword id="KW-0722">Serine protease inhibitor</keyword>
<keyword id="KW-0732">Signal</keyword>
<gene>
    <name evidence="12" type="primary">SRPN2</name>
    <name type="synonym">1270169</name>
    <name evidence="16" type="ORF">AgaP_AGAP006911</name>
</gene>
<sequence length="409" mass="46512">MNKLNFVILCLAALLVFDATAQQDVHGPFQGQRQNEFDLMFVKEIFKNHNSNVVLSPFSVKILLTLIYEASDTSFGNAVSNTKRELSSVIQNDNIDHTRSYYKQLLESAQQDNKDYDLNIATNFFVDDFIEVINKYQQIANTHYHAMLEKVSYSNPTQTAATINNWVSEHTNGRLREIVTPDSLEGAVITLVNVIYFKGLWTYPFPEVANNVKPFYGTRGKPTNAQYMEQNGQFYYDNSADLGAQILRLPYRGNKLAMYFILPNPDNTVNQVLDRINSASLHQALWYMEENEVNVTLPKFKFDFSEQLNEPLQQVGIREIFSQNASLPLLARGRGARDEVRVSRIFQKAGITINELGSEAYAATEIQLVNKFGGDGVQIFNANRPFIFFIEDETLGTMLFAGKIENPVF</sequence>
<evidence type="ECO:0000255" key="1"/>
<evidence type="ECO:0000255" key="2">
    <source>
        <dbReference type="PROSITE-ProRule" id="PRU00498"/>
    </source>
</evidence>
<evidence type="ECO:0000255" key="3">
    <source>
        <dbReference type="RuleBase" id="RU000411"/>
    </source>
</evidence>
<evidence type="ECO:0000269" key="4">
    <source>
    </source>
</evidence>
<evidence type="ECO:0000269" key="5">
    <source>
    </source>
</evidence>
<evidence type="ECO:0000269" key="6">
    <source>
    </source>
</evidence>
<evidence type="ECO:0000269" key="7">
    <source>
    </source>
</evidence>
<evidence type="ECO:0000269" key="8">
    <source>
    </source>
</evidence>
<evidence type="ECO:0000269" key="9">
    <source>
    </source>
</evidence>
<evidence type="ECO:0000269" key="10">
    <source>
    </source>
</evidence>
<evidence type="ECO:0000269" key="11">
    <source>
    </source>
</evidence>
<evidence type="ECO:0000303" key="12">
    <source>
    </source>
</evidence>
<evidence type="ECO:0000305" key="13"/>
<evidence type="ECO:0000305" key="14">
    <source>
    </source>
</evidence>
<evidence type="ECO:0000312" key="15">
    <source>
        <dbReference type="EMBL" id="ABJ52801.1"/>
    </source>
</evidence>
<evidence type="ECO:0000312" key="16">
    <source>
        <dbReference type="EMBL" id="EAA04043.4"/>
    </source>
</evidence>
<evidence type="ECO:0000312" key="17">
    <source>
        <dbReference type="Proteomes" id="UP000007062"/>
    </source>
</evidence>
<evidence type="ECO:0007744" key="18">
    <source>
        <dbReference type="PDB" id="3PZF"/>
    </source>
</evidence>
<evidence type="ECO:0007744" key="19">
    <source>
        <dbReference type="PDB" id="4RO9"/>
    </source>
</evidence>
<evidence type="ECO:0007744" key="20">
    <source>
        <dbReference type="PDB" id="4ROA"/>
    </source>
</evidence>
<evidence type="ECO:0007744" key="21">
    <source>
        <dbReference type="PDB" id="4ROB"/>
    </source>
</evidence>
<evidence type="ECO:0007744" key="22">
    <source>
        <dbReference type="PDB" id="4RSQ"/>
    </source>
</evidence>
<evidence type="ECO:0007829" key="23">
    <source>
        <dbReference type="PDB" id="3PZF"/>
    </source>
</evidence>
<evidence type="ECO:0007829" key="24">
    <source>
        <dbReference type="PDB" id="4RSQ"/>
    </source>
</evidence>
<dbReference type="EMBL" id="DQ974161">
    <property type="protein sequence ID" value="ABJ52801.1"/>
    <property type="molecule type" value="mRNA"/>
</dbReference>
<dbReference type="EMBL" id="AAAB01008807">
    <property type="protein sequence ID" value="EAA04043.4"/>
    <property type="molecule type" value="Genomic_DNA"/>
</dbReference>
<dbReference type="RefSeq" id="XP_308845.4">
    <property type="nucleotide sequence ID" value="XM_308845.4"/>
</dbReference>
<dbReference type="PDB" id="3PZF">
    <property type="method" value="X-ray"/>
    <property type="resolution" value="1.75 A"/>
    <property type="chains" value="A=22-409"/>
</dbReference>
<dbReference type="PDB" id="4RO9">
    <property type="method" value="X-ray"/>
    <property type="resolution" value="2.00 A"/>
    <property type="chains" value="A/B/C=22-409"/>
</dbReference>
<dbReference type="PDB" id="4ROA">
    <property type="method" value="X-ray"/>
    <property type="resolution" value="1.90 A"/>
    <property type="chains" value="A=22-409"/>
</dbReference>
<dbReference type="PDB" id="4ROB">
    <property type="method" value="X-ray"/>
    <property type="resolution" value="2.80 A"/>
    <property type="chains" value="A/B/C=22-409"/>
</dbReference>
<dbReference type="PDB" id="4RSQ">
    <property type="method" value="X-ray"/>
    <property type="resolution" value="2.90 A"/>
    <property type="chains" value="A/B/C/D/E/F/G/H/I/J/K/L=22-409"/>
</dbReference>
<dbReference type="PDBsum" id="3PZF"/>
<dbReference type="PDBsum" id="4RO9"/>
<dbReference type="PDBsum" id="4ROA"/>
<dbReference type="PDBsum" id="4ROB"/>
<dbReference type="PDBsum" id="4RSQ"/>
<dbReference type="SMR" id="Q7QIJ8"/>
<dbReference type="FunCoup" id="Q7QIJ8">
    <property type="interactions" value="36"/>
</dbReference>
<dbReference type="STRING" id="7165.Q7QIJ8"/>
<dbReference type="MEROPS" id="I04.070"/>
<dbReference type="GlyCosmos" id="Q7QIJ8">
    <property type="glycosylation" value="2 sites, No reported glycans"/>
</dbReference>
<dbReference type="PaxDb" id="7165-AGAP006911-PA"/>
<dbReference type="EnsemblMetazoa" id="AGAP006911-RA">
    <property type="protein sequence ID" value="AGAP006911-PA"/>
    <property type="gene ID" value="AGAP006911"/>
</dbReference>
<dbReference type="GeneID" id="1270169"/>
<dbReference type="KEGG" id="aga:1270169"/>
<dbReference type="VEuPathDB" id="VectorBase:AGAMI1_006884"/>
<dbReference type="VEuPathDB" id="VectorBase:AGAP006911"/>
<dbReference type="eggNOG" id="KOG2392">
    <property type="taxonomic scope" value="Eukaryota"/>
</dbReference>
<dbReference type="HOGENOM" id="CLU_023330_0_1_1"/>
<dbReference type="InParanoid" id="Q7QIJ8"/>
<dbReference type="OMA" id="VKSAQWA"/>
<dbReference type="PhylomeDB" id="Q7QIJ8"/>
<dbReference type="EvolutionaryTrace" id="Q7QIJ8"/>
<dbReference type="Proteomes" id="UP000007062">
    <property type="component" value="Chromosome 2L"/>
</dbReference>
<dbReference type="GO" id="GO:0005615">
    <property type="term" value="C:extracellular space"/>
    <property type="evidence" value="ECO:0000314"/>
    <property type="project" value="UniProtKB"/>
</dbReference>
<dbReference type="GO" id="GO:0004867">
    <property type="term" value="F:serine-type endopeptidase inhibitor activity"/>
    <property type="evidence" value="ECO:0000314"/>
    <property type="project" value="UniProtKB"/>
</dbReference>
<dbReference type="GO" id="GO:0042832">
    <property type="term" value="P:defense response to protozoan"/>
    <property type="evidence" value="ECO:0000314"/>
    <property type="project" value="UniProtKB"/>
</dbReference>
<dbReference type="GO" id="GO:0045087">
    <property type="term" value="P:innate immune response"/>
    <property type="evidence" value="ECO:0007669"/>
    <property type="project" value="UniProtKB-KW"/>
</dbReference>
<dbReference type="GO" id="GO:0010951">
    <property type="term" value="P:negative regulation of endopeptidase activity"/>
    <property type="evidence" value="ECO:0000315"/>
    <property type="project" value="UniProtKB"/>
</dbReference>
<dbReference type="GO" id="GO:0035009">
    <property type="term" value="P:negative regulation of melanization defense response"/>
    <property type="evidence" value="ECO:0000314"/>
    <property type="project" value="UniProtKB"/>
</dbReference>
<dbReference type="GO" id="GO:0010955">
    <property type="term" value="P:negative regulation of protein processing"/>
    <property type="evidence" value="ECO:0000315"/>
    <property type="project" value="UniProtKB"/>
</dbReference>
<dbReference type="GO" id="GO:0045861">
    <property type="term" value="P:negative regulation of proteolysis"/>
    <property type="evidence" value="ECO:0000314"/>
    <property type="project" value="UniProtKB"/>
</dbReference>
<dbReference type="GO" id="GO:0050776">
    <property type="term" value="P:regulation of immune response"/>
    <property type="evidence" value="ECO:0000318"/>
    <property type="project" value="GO_Central"/>
</dbReference>
<dbReference type="CDD" id="cd19578">
    <property type="entry name" value="serpinK_insect_SRPN2-like"/>
    <property type="match status" value="1"/>
</dbReference>
<dbReference type="FunFam" id="2.30.39.10:FF:000030">
    <property type="entry name" value="Serpin 2"/>
    <property type="match status" value="3"/>
</dbReference>
<dbReference type="Gene3D" id="2.30.39.10">
    <property type="entry name" value="Alpha-1-antitrypsin, domain 1"/>
    <property type="match status" value="2"/>
</dbReference>
<dbReference type="Gene3D" id="3.30.497.10">
    <property type="entry name" value="Antithrombin, subunit I, domain 2"/>
    <property type="match status" value="1"/>
</dbReference>
<dbReference type="InterPro" id="IPR023795">
    <property type="entry name" value="Serpin_CS"/>
</dbReference>
<dbReference type="InterPro" id="IPR023796">
    <property type="entry name" value="Serpin_dom"/>
</dbReference>
<dbReference type="InterPro" id="IPR000215">
    <property type="entry name" value="Serpin_fam"/>
</dbReference>
<dbReference type="InterPro" id="IPR036186">
    <property type="entry name" value="Serpin_sf"/>
</dbReference>
<dbReference type="InterPro" id="IPR042178">
    <property type="entry name" value="Serpin_sf_1"/>
</dbReference>
<dbReference type="InterPro" id="IPR042185">
    <property type="entry name" value="Serpin_sf_2"/>
</dbReference>
<dbReference type="PANTHER" id="PTHR11461:SF357">
    <property type="entry name" value="SERINE PROTEASE INHIBITOR 27A"/>
    <property type="match status" value="1"/>
</dbReference>
<dbReference type="PANTHER" id="PTHR11461">
    <property type="entry name" value="SERINE PROTEASE INHIBITOR, SERPIN"/>
    <property type="match status" value="1"/>
</dbReference>
<dbReference type="Pfam" id="PF00079">
    <property type="entry name" value="Serpin"/>
    <property type="match status" value="1"/>
</dbReference>
<dbReference type="SMART" id="SM00093">
    <property type="entry name" value="SERPIN"/>
    <property type="match status" value="1"/>
</dbReference>
<dbReference type="SUPFAM" id="SSF56574">
    <property type="entry name" value="Serpins"/>
    <property type="match status" value="1"/>
</dbReference>
<dbReference type="PROSITE" id="PS00284">
    <property type="entry name" value="SERPIN"/>
    <property type="match status" value="1"/>
</dbReference>
<comment type="function">
    <text evidence="4 6 7 8 9 10 11">Serine protease inhibitor that functions in the melanization-mediated immune response (PubMed:16113656, PubMed:20953892, PubMed:21465556, PubMed:25525260, PubMed:33045027, PubMed:33520733). By preventing the activation of phenoloxidases through the inhibiting of serine proteases CLIPB9, CLIPB10 and CLIPB4, negatively regulates melanization in the hemolymph (PubMed:16113656, PubMed:20953892, PubMed:21465556, PubMed:25525260, PubMed:33045027, PubMed:33520733, PubMed:37703846). By preventing melanization, has a detrimental role during P.berghei parasite mediated-infection and invasion of the mosquito midgut (PubMed:16113656).</text>
</comment>
<comment type="subunit">
    <text evidence="6 8 10 11">Forms a covalent heterodimer with protease CLIPB9; the interaction inhibits CLIPB9 protease activity (PubMed:20953892, PubMed:25525260). Forms a covalent heterodimer with protease CLIPB10; the interaction inhibits CLIPB10 catalytic activity (PubMed:33520733). Interacts with CLIPB4 in the hemolymph of immune-challenged female mosquitoes; the interaction results in CLIPB4 inhibition (PubMed:37703846).</text>
</comment>
<comment type="subcellular location">
    <subcellularLocation>
        <location evidence="4">Secreted</location>
    </subcellularLocation>
    <text evidence="4 6">Secreted into the hemolymph.</text>
</comment>
<comment type="developmental stage">
    <text evidence="5">Expressed in embryos, larvae, pupae, and female and male adults.</text>
</comment>
<comment type="PTM">
    <text evidence="8">Protease CLIPB9 binds to SRPN2 via the hinge region resulting in the cleavage of the reactive bond (PubMed:25525260). This leads to a conformational change in SRPN2 which traps CLIPB9 and distorts its active site, resulting in CLIPB9 inactivation (PubMed:25525260).</text>
</comment>
<comment type="disruption phenotype">
    <text evidence="4 6 9 10 11">RNAi-mediated knockdown in female causes spontaneous melanization leading to the formation of melanotic pseudotumors and a shortening of lifespan; spontaneous melanization is reduced in double SRPN2/CLIPB9, SRPN2/CLIPB10 and SRPN2/CLIPB4 mutant backgrounds (PubMed:16113656, PubMed:20953892, PubMed:33520733, PubMed:37703846). During the mosquito midgut infection by the rodent malaria parasite P.berghei, severely reduces oocyst numbers due to an increase in ookinete lysis and melanization (PubMed:16113656). Does not affect ookinete formation (PubMed:16113656). Causes proteolytic cleavage of CLIPA28 and CLIPC9 in absence of E.coli infection (PubMed:33045027).</text>
</comment>
<comment type="similarity">
    <text evidence="3">Belongs to the serpin family.</text>
</comment>
<name>SP2_ANOGA</name>
<protein>
    <recommendedName>
        <fullName evidence="12">Serine protease inhibitor 2</fullName>
        <shortName evidence="12">Serpin 2</shortName>
    </recommendedName>
</protein>
<accession>Q7QIJ8</accession>
<accession>Q005N3</accession>
<organism evidence="17">
    <name type="scientific">Anopheles gambiae</name>
    <name type="common">African malaria mosquito</name>
    <dbReference type="NCBI Taxonomy" id="7165"/>
    <lineage>
        <taxon>Eukaryota</taxon>
        <taxon>Metazoa</taxon>
        <taxon>Ecdysozoa</taxon>
        <taxon>Arthropoda</taxon>
        <taxon>Hexapoda</taxon>
        <taxon>Insecta</taxon>
        <taxon>Pterygota</taxon>
        <taxon>Neoptera</taxon>
        <taxon>Endopterygota</taxon>
        <taxon>Diptera</taxon>
        <taxon>Nematocera</taxon>
        <taxon>Culicoidea</taxon>
        <taxon>Culicidae</taxon>
        <taxon>Anophelinae</taxon>
        <taxon>Anopheles</taxon>
    </lineage>
</organism>